<reference key="1">
    <citation type="submission" date="2005-08" db="EMBL/GenBank/DDBJ databases">
        <title>Complete sequence of chromosome 1 of Synechococcus elongatus PCC 7942.</title>
        <authorList>
            <consortium name="US DOE Joint Genome Institute"/>
            <person name="Copeland A."/>
            <person name="Lucas S."/>
            <person name="Lapidus A."/>
            <person name="Barry K."/>
            <person name="Detter J.C."/>
            <person name="Glavina T."/>
            <person name="Hammon N."/>
            <person name="Israni S."/>
            <person name="Pitluck S."/>
            <person name="Schmutz J."/>
            <person name="Larimer F."/>
            <person name="Land M."/>
            <person name="Kyrpides N."/>
            <person name="Lykidis A."/>
            <person name="Golden S."/>
            <person name="Richardson P."/>
        </authorList>
    </citation>
    <scope>NUCLEOTIDE SEQUENCE [LARGE SCALE GENOMIC DNA]</scope>
    <source>
        <strain>ATCC 33912 / PCC 7942 / FACHB-805</strain>
    </source>
</reference>
<evidence type="ECO:0000255" key="1">
    <source>
        <dbReference type="HAMAP-Rule" id="MF_00072"/>
    </source>
</evidence>
<proteinExistence type="inferred from homology"/>
<name>RF3_SYNE7</name>
<comment type="function">
    <text evidence="1">Increases the formation of ribosomal termination complexes and stimulates activities of RF-1 and RF-2. It binds guanine nucleotides and has strong preference for UGA stop codons. It may interact directly with the ribosome. The stimulation of RF-1 and RF-2 is significantly reduced by GTP and GDP, but not by GMP.</text>
</comment>
<comment type="subcellular location">
    <subcellularLocation>
        <location evidence="1">Cytoplasm</location>
    </subcellularLocation>
</comment>
<comment type="similarity">
    <text evidence="1">Belongs to the TRAFAC class translation factor GTPase superfamily. Classic translation factor GTPase family. PrfC subfamily.</text>
</comment>
<feature type="chain" id="PRO_0000242221" description="Peptide chain release factor 3">
    <location>
        <begin position="1"/>
        <end position="556"/>
    </location>
</feature>
<feature type="domain" description="tr-type G">
    <location>
        <begin position="28"/>
        <end position="297"/>
    </location>
</feature>
<feature type="binding site" evidence="1">
    <location>
        <begin position="37"/>
        <end position="44"/>
    </location>
    <ligand>
        <name>GTP</name>
        <dbReference type="ChEBI" id="CHEBI:37565"/>
    </ligand>
</feature>
<feature type="binding site" evidence="1">
    <location>
        <begin position="105"/>
        <end position="109"/>
    </location>
    <ligand>
        <name>GTP</name>
        <dbReference type="ChEBI" id="CHEBI:37565"/>
    </ligand>
</feature>
<feature type="binding site" evidence="1">
    <location>
        <begin position="159"/>
        <end position="162"/>
    </location>
    <ligand>
        <name>GTP</name>
        <dbReference type="ChEBI" id="CHEBI:37565"/>
    </ligand>
</feature>
<protein>
    <recommendedName>
        <fullName evidence="1">Peptide chain release factor 3</fullName>
        <shortName evidence="1">RF-3</shortName>
    </recommendedName>
</protein>
<keyword id="KW-0963">Cytoplasm</keyword>
<keyword id="KW-0342">GTP-binding</keyword>
<keyword id="KW-0547">Nucleotide-binding</keyword>
<keyword id="KW-0648">Protein biosynthesis</keyword>
<keyword id="KW-1185">Reference proteome</keyword>
<dbReference type="EMBL" id="CP000100">
    <property type="protein sequence ID" value="ABB58395.1"/>
    <property type="molecule type" value="Genomic_DNA"/>
</dbReference>
<dbReference type="SMR" id="Q31KM4"/>
<dbReference type="STRING" id="1140.Synpcc7942_2365"/>
<dbReference type="PaxDb" id="1140-Synpcc7942_2365"/>
<dbReference type="KEGG" id="syf:Synpcc7942_2365"/>
<dbReference type="eggNOG" id="COG4108">
    <property type="taxonomic scope" value="Bacteria"/>
</dbReference>
<dbReference type="HOGENOM" id="CLU_002794_2_1_3"/>
<dbReference type="BioCyc" id="SYNEL:SYNPCC7942_2365-MONOMER"/>
<dbReference type="Proteomes" id="UP000889800">
    <property type="component" value="Chromosome"/>
</dbReference>
<dbReference type="GO" id="GO:0005829">
    <property type="term" value="C:cytosol"/>
    <property type="evidence" value="ECO:0007669"/>
    <property type="project" value="TreeGrafter"/>
</dbReference>
<dbReference type="GO" id="GO:0005525">
    <property type="term" value="F:GTP binding"/>
    <property type="evidence" value="ECO:0007669"/>
    <property type="project" value="UniProtKB-UniRule"/>
</dbReference>
<dbReference type="GO" id="GO:0003924">
    <property type="term" value="F:GTPase activity"/>
    <property type="evidence" value="ECO:0007669"/>
    <property type="project" value="InterPro"/>
</dbReference>
<dbReference type="GO" id="GO:0016150">
    <property type="term" value="F:translation release factor activity, codon nonspecific"/>
    <property type="evidence" value="ECO:0007669"/>
    <property type="project" value="TreeGrafter"/>
</dbReference>
<dbReference type="GO" id="GO:0016149">
    <property type="term" value="F:translation release factor activity, codon specific"/>
    <property type="evidence" value="ECO:0007669"/>
    <property type="project" value="UniProtKB-UniRule"/>
</dbReference>
<dbReference type="GO" id="GO:0006449">
    <property type="term" value="P:regulation of translational termination"/>
    <property type="evidence" value="ECO:0007669"/>
    <property type="project" value="UniProtKB-UniRule"/>
</dbReference>
<dbReference type="CDD" id="cd04169">
    <property type="entry name" value="RF3"/>
    <property type="match status" value="1"/>
</dbReference>
<dbReference type="CDD" id="cd03689">
    <property type="entry name" value="RF3_II"/>
    <property type="match status" value="1"/>
</dbReference>
<dbReference type="FunFam" id="3.30.70.3280:FF:000001">
    <property type="entry name" value="Peptide chain release factor 3"/>
    <property type="match status" value="1"/>
</dbReference>
<dbReference type="FunFam" id="3.40.50.300:FF:000542">
    <property type="entry name" value="Peptide chain release factor 3"/>
    <property type="match status" value="1"/>
</dbReference>
<dbReference type="Gene3D" id="3.40.50.300">
    <property type="entry name" value="P-loop containing nucleotide triphosphate hydrolases"/>
    <property type="match status" value="1"/>
</dbReference>
<dbReference type="Gene3D" id="3.30.70.3280">
    <property type="entry name" value="Peptide chain release factor 3, domain III"/>
    <property type="match status" value="1"/>
</dbReference>
<dbReference type="Gene3D" id="2.40.30.10">
    <property type="entry name" value="Translation factors"/>
    <property type="match status" value="1"/>
</dbReference>
<dbReference type="HAMAP" id="MF_00072">
    <property type="entry name" value="Rel_fac_3"/>
    <property type="match status" value="1"/>
</dbReference>
<dbReference type="InterPro" id="IPR053905">
    <property type="entry name" value="EF-G-like_DII"/>
</dbReference>
<dbReference type="InterPro" id="IPR035647">
    <property type="entry name" value="EFG_III/V"/>
</dbReference>
<dbReference type="InterPro" id="IPR031157">
    <property type="entry name" value="G_TR_CS"/>
</dbReference>
<dbReference type="InterPro" id="IPR027417">
    <property type="entry name" value="P-loop_NTPase"/>
</dbReference>
<dbReference type="InterPro" id="IPR004548">
    <property type="entry name" value="PrfC"/>
</dbReference>
<dbReference type="InterPro" id="IPR032090">
    <property type="entry name" value="RF3_C"/>
</dbReference>
<dbReference type="InterPro" id="IPR038467">
    <property type="entry name" value="RF3_dom_3_sf"/>
</dbReference>
<dbReference type="InterPro" id="IPR041732">
    <property type="entry name" value="RF3_GTP-bd"/>
</dbReference>
<dbReference type="InterPro" id="IPR005225">
    <property type="entry name" value="Small_GTP-bd"/>
</dbReference>
<dbReference type="InterPro" id="IPR000795">
    <property type="entry name" value="T_Tr_GTP-bd_dom"/>
</dbReference>
<dbReference type="InterPro" id="IPR009000">
    <property type="entry name" value="Transl_B-barrel_sf"/>
</dbReference>
<dbReference type="NCBIfam" id="TIGR00503">
    <property type="entry name" value="prfC"/>
    <property type="match status" value="1"/>
</dbReference>
<dbReference type="NCBIfam" id="NF001964">
    <property type="entry name" value="PRK00741.1"/>
    <property type="match status" value="1"/>
</dbReference>
<dbReference type="NCBIfam" id="TIGR00231">
    <property type="entry name" value="small_GTP"/>
    <property type="match status" value="1"/>
</dbReference>
<dbReference type="PANTHER" id="PTHR43556">
    <property type="entry name" value="PEPTIDE CHAIN RELEASE FACTOR RF3"/>
    <property type="match status" value="1"/>
</dbReference>
<dbReference type="PANTHER" id="PTHR43556:SF2">
    <property type="entry name" value="PEPTIDE CHAIN RELEASE FACTOR RF3"/>
    <property type="match status" value="1"/>
</dbReference>
<dbReference type="Pfam" id="PF22042">
    <property type="entry name" value="EF-G_D2"/>
    <property type="match status" value="1"/>
</dbReference>
<dbReference type="Pfam" id="PF00009">
    <property type="entry name" value="GTP_EFTU"/>
    <property type="match status" value="1"/>
</dbReference>
<dbReference type="Pfam" id="PF16658">
    <property type="entry name" value="RF3_C"/>
    <property type="match status" value="1"/>
</dbReference>
<dbReference type="PRINTS" id="PR00315">
    <property type="entry name" value="ELONGATNFCT"/>
</dbReference>
<dbReference type="SUPFAM" id="SSF54980">
    <property type="entry name" value="EF-G C-terminal domain-like"/>
    <property type="match status" value="1"/>
</dbReference>
<dbReference type="SUPFAM" id="SSF52540">
    <property type="entry name" value="P-loop containing nucleoside triphosphate hydrolases"/>
    <property type="match status" value="1"/>
</dbReference>
<dbReference type="SUPFAM" id="SSF50447">
    <property type="entry name" value="Translation proteins"/>
    <property type="match status" value="1"/>
</dbReference>
<dbReference type="PROSITE" id="PS00301">
    <property type="entry name" value="G_TR_1"/>
    <property type="match status" value="1"/>
</dbReference>
<dbReference type="PROSITE" id="PS51722">
    <property type="entry name" value="G_TR_2"/>
    <property type="match status" value="1"/>
</dbReference>
<accession>Q31KM4</accession>
<sequence>MGVHSFLCSSPWFRMVTDLQKEIQEAVQQRRNFAIISHPDAGKTTLTEKLLLYGGAIQEAGAVKAKRSQRAATSDWMELEKQRGISITSTVLQFNYHDCTINLLDTPGHQDFSEDTYRTLAAADNAVMLEDAAKGLEPQTRKLFEVCRMRNIPIFTFFNKMDRPGREPLELLDEIEQELGLQTYAVNWPIGSGDRFRGVFDRRKQQVHLFERSVHGKRQAKDTTLEWGDPQLADLIEPDLLQQLQDELELLEGVGTEFDLEAIHAGQLTPVFWGSAMTNFGVELFLEAFLDYALKPGARRSSVGDMAPDYPEFSGFVFKLQANMDPRHRDRIAFVRVCTGKFEKDMTVQHARSGRTLRLSRPQKLFGQDREVLDDAYPGDVIGLNNPGMFAIGDTIYTGKRLEYDGIPCFSPEIFAYLRNPNPSKFKPFRKGVSELREEGAVQIMYSADSAKRDPILAAVGQLQLEVVQYRLENEYGVETLLEPLPFSVARWVEGGWDVLEKVGRLFNTTTVKDTWGRPVLLFKNEWNLRQIEADHPELQLRSVAPVAAGQEPIEV</sequence>
<gene>
    <name evidence="1" type="primary">prfC</name>
    <name type="ordered locus">Synpcc7942_2365</name>
</gene>
<organism>
    <name type="scientific">Synechococcus elongatus (strain ATCC 33912 / PCC 7942 / FACHB-805)</name>
    <name type="common">Anacystis nidulans R2</name>
    <dbReference type="NCBI Taxonomy" id="1140"/>
    <lineage>
        <taxon>Bacteria</taxon>
        <taxon>Bacillati</taxon>
        <taxon>Cyanobacteriota</taxon>
        <taxon>Cyanophyceae</taxon>
        <taxon>Synechococcales</taxon>
        <taxon>Synechococcaceae</taxon>
        <taxon>Synechococcus</taxon>
    </lineage>
</organism>